<gene>
    <name type="ordered locus">MAB_0732c</name>
</gene>
<comment type="function">
    <text evidence="1">Heme-binding protein able to scavenge peroxynitrite and to protect free L-tyrosine against peroxynitrite-mediated nitration, by acting as a peroxynitrite isomerase that converts peroxynitrite to nitrate. Therefore, this protein likely plays a role in peroxynitrite sensing and in the detoxification of reactive nitrogen and oxygen species (RNS and ROS, respectively). Is able to bind nitric oxide (NO) in vitro, but may act as a sensor of peroxynitrite levels in vivo.</text>
</comment>
<comment type="catalytic activity">
    <reaction evidence="1">
        <text>peroxynitrite = nitrate</text>
        <dbReference type="Rhea" id="RHEA:63116"/>
        <dbReference type="ChEBI" id="CHEBI:17632"/>
        <dbReference type="ChEBI" id="CHEBI:25941"/>
    </reaction>
    <physiologicalReaction direction="left-to-right" evidence="1">
        <dbReference type="Rhea" id="RHEA:63117"/>
    </physiologicalReaction>
</comment>
<comment type="cofactor">
    <cofactor evidence="1">
        <name>heme b</name>
        <dbReference type="ChEBI" id="CHEBI:60344"/>
    </cofactor>
    <text evidence="1">Binds 1 heme b group per subunit, that coordinates a highly solvent-exposed Fe(III) atom.</text>
</comment>
<comment type="pathway">
    <text evidence="1">Nitrogen metabolism.</text>
</comment>
<comment type="subunit">
    <text evidence="1">Homodimer.</text>
</comment>
<comment type="domain">
    <text evidence="1">Forms a 10-stranded antiparallel beta-barrel structure able to accommodate a hydrophobic ligand in its interior. In fact, this fold hosts the heme group, which is located in a wide surface cleft.</text>
</comment>
<comment type="similarity">
    <text evidence="1">Belongs to the nitrobindin family.</text>
</comment>
<protein>
    <recommendedName>
        <fullName>Peroxynitrite isomerase</fullName>
        <ecNumber evidence="1">5.99.-.-</ecNumber>
    </recommendedName>
    <alternativeName>
        <fullName>Ferric nitrobindin</fullName>
        <shortName>Nb(III)</shortName>
    </alternativeName>
</protein>
<evidence type="ECO:0000255" key="1">
    <source>
        <dbReference type="HAMAP-Rule" id="MF_01297"/>
    </source>
</evidence>
<evidence type="ECO:0000256" key="2">
    <source>
        <dbReference type="SAM" id="MobiDB-lite"/>
    </source>
</evidence>
<keyword id="KW-0349">Heme</keyword>
<keyword id="KW-0408">Iron</keyword>
<keyword id="KW-0413">Isomerase</keyword>
<keyword id="KW-0479">Metal-binding</keyword>
<keyword id="KW-1185">Reference proteome</keyword>
<name>NB_MYCA9</name>
<organism>
    <name type="scientific">Mycobacteroides abscessus (strain ATCC 19977 / DSM 44196 / CCUG 20993 / CIP 104536 / JCM 13569 / NCTC 13031 / TMC 1543 / L948)</name>
    <name type="common">Mycobacterium abscessus</name>
    <dbReference type="NCBI Taxonomy" id="561007"/>
    <lineage>
        <taxon>Bacteria</taxon>
        <taxon>Bacillati</taxon>
        <taxon>Actinomycetota</taxon>
        <taxon>Actinomycetes</taxon>
        <taxon>Mycobacteriales</taxon>
        <taxon>Mycobacteriaceae</taxon>
        <taxon>Mycobacteroides</taxon>
        <taxon>Mycobacteroides abscessus</taxon>
    </lineage>
</organism>
<accession>B1MI06</accession>
<feature type="chain" id="PRO_0000356913" description="Peroxynitrite isomerase">
    <location>
        <begin position="1"/>
        <end position="205"/>
    </location>
</feature>
<feature type="region of interest" description="Disordered" evidence="2">
    <location>
        <begin position="1"/>
        <end position="23"/>
    </location>
</feature>
<feature type="short sequence motif" description="GXWXGXG" evidence="1">
    <location>
        <begin position="52"/>
        <end position="58"/>
    </location>
</feature>
<feature type="binding site" evidence="1">
    <location>
        <position position="63"/>
    </location>
    <ligand>
        <name>heme b</name>
        <dbReference type="ChEBI" id="CHEBI:60344"/>
    </ligand>
</feature>
<feature type="binding site" evidence="1">
    <location>
        <position position="168"/>
    </location>
    <ligand>
        <name>heme b</name>
        <dbReference type="ChEBI" id="CHEBI:60344"/>
    </ligand>
</feature>
<feature type="binding site" description="axial binding residue" evidence="1">
    <location>
        <position position="195"/>
    </location>
    <ligand>
        <name>heme b</name>
        <dbReference type="ChEBI" id="CHEBI:60344"/>
    </ligand>
    <ligandPart>
        <name>Fe</name>
        <dbReference type="ChEBI" id="CHEBI:18248"/>
    </ligandPart>
</feature>
<dbReference type="EC" id="5.99.-.-" evidence="1"/>
<dbReference type="EMBL" id="CU458896">
    <property type="protein sequence ID" value="CAM60828.1"/>
    <property type="molecule type" value="Genomic_DNA"/>
</dbReference>
<dbReference type="RefSeq" id="WP_005064231.1">
    <property type="nucleotide sequence ID" value="NZ_MLCG01000008.1"/>
</dbReference>
<dbReference type="SMR" id="B1MI06"/>
<dbReference type="GeneID" id="93377677"/>
<dbReference type="KEGG" id="mab:MAB_0732c"/>
<dbReference type="Proteomes" id="UP000007137">
    <property type="component" value="Chromosome"/>
</dbReference>
<dbReference type="GO" id="GO:0020037">
    <property type="term" value="F:heme binding"/>
    <property type="evidence" value="ECO:0007669"/>
    <property type="project" value="UniProtKB-UniRule"/>
</dbReference>
<dbReference type="GO" id="GO:0046872">
    <property type="term" value="F:metal ion binding"/>
    <property type="evidence" value="ECO:0007669"/>
    <property type="project" value="UniProtKB-KW"/>
</dbReference>
<dbReference type="GO" id="GO:0062213">
    <property type="term" value="F:peroxynitrite isomerase activity"/>
    <property type="evidence" value="ECO:0007669"/>
    <property type="project" value="UniProtKB-UniRule"/>
</dbReference>
<dbReference type="CDD" id="cd07828">
    <property type="entry name" value="lipocalin_heme-bd-THAP4-like"/>
    <property type="match status" value="1"/>
</dbReference>
<dbReference type="Gene3D" id="2.40.128.20">
    <property type="match status" value="1"/>
</dbReference>
<dbReference type="HAMAP" id="MF_01297">
    <property type="entry name" value="nitrobindin"/>
    <property type="match status" value="1"/>
</dbReference>
<dbReference type="InterPro" id="IPR012674">
    <property type="entry name" value="Calycin"/>
</dbReference>
<dbReference type="InterPro" id="IPR022939">
    <property type="entry name" value="Nb(III)_bact/plant"/>
</dbReference>
<dbReference type="InterPro" id="IPR045165">
    <property type="entry name" value="Nitrobindin"/>
</dbReference>
<dbReference type="InterPro" id="IPR014878">
    <property type="entry name" value="THAP4-like_heme-bd"/>
</dbReference>
<dbReference type="PANTHER" id="PTHR15854:SF4">
    <property type="entry name" value="PEROXYNITRITE ISOMERASE THAP4"/>
    <property type="match status" value="1"/>
</dbReference>
<dbReference type="PANTHER" id="PTHR15854">
    <property type="entry name" value="THAP4 PROTEIN"/>
    <property type="match status" value="1"/>
</dbReference>
<dbReference type="Pfam" id="PF08768">
    <property type="entry name" value="THAP4_heme-bd"/>
    <property type="match status" value="1"/>
</dbReference>
<dbReference type="SUPFAM" id="SSF50814">
    <property type="entry name" value="Lipocalins"/>
    <property type="match status" value="1"/>
</dbReference>
<proteinExistence type="inferred from homology"/>
<reference key="1">
    <citation type="journal article" date="2009" name="PLoS ONE">
        <title>Non mycobacterial virulence genes in the genome of the emerging pathogen Mycobacterium abscessus.</title>
        <authorList>
            <person name="Ripoll F."/>
            <person name="Pasek S."/>
            <person name="Schenowitz C."/>
            <person name="Dossat C."/>
            <person name="Barbe V."/>
            <person name="Rottman M."/>
            <person name="Macheras E."/>
            <person name="Heym B."/>
            <person name="Herrmann J.L."/>
            <person name="Daffe M."/>
            <person name="Brosch R."/>
            <person name="Risler J.L."/>
            <person name="Gaillard J.L."/>
        </authorList>
    </citation>
    <scope>NUCLEOTIDE SEQUENCE [LARGE SCALE GENOMIC DNA]</scope>
    <source>
        <strain>ATCC 19977 / DSM 44196 / CCUG 20993 / CIP 104536 / JCM 13569 / NCTC 13031 / TMC 1543 / L948</strain>
    </source>
</reference>
<sequence>MTEPDPAAAEQRPSVGRNLPTFQDLPIPADTANLREGPDLNAAMLALLPLVGVWRGEGEGRDTDGDYRFGQQIVVAHDGSDYLTWDARSWRLDADGQFEQLTLRETGFWRFAPDPNDPDENQAIELVLAHAAGFVELFYGQPLNASSWELVTDALARSKSGALIGGAKRLYGIVDGGDLAYVEERVGADGGLEPHLSARLSRFAG</sequence>